<comment type="function">
    <text evidence="7">Essential component of the vacuolar proton pump (V-ATPase), a multimeric enzyme that catalyzes the translocation of protons across the membranes. Required for assembly and activity of the V-ATPase. Involved in vacuolar nutrient storage (e.g. accumulation and storage of nitrate) and in tolerance to some toxic ions (e.g. zinc ions sequestration in vacuoles).</text>
</comment>
<comment type="subunit">
    <text evidence="1">V-ATPase is a heteromultimeric enzyme composed of a peripheral catalytic V1 complex (components A to H) attached to an integral membrane V0 proton pore complex (components: a, c, c'', d and e).</text>
</comment>
<comment type="subcellular location">
    <subcellularLocation>
        <location evidence="3 4 5 6">Vacuole membrane</location>
        <topology evidence="2 3 4 6">Multi-pass membrane protein</topology>
    </subcellularLocation>
</comment>
<comment type="tissue specificity">
    <text evidence="6">Expressed in etiolated seedlings hypocotyls.</text>
</comment>
<comment type="disruption phenotype">
    <text evidence="6 7">When associated with VHA-a2 disruption, day-length-dependent growth retardation associated with a reduced accumulation and storage of nitrate ions in vacuoles. Increased sensitivity to zinc ions due to a lower zinc ions sequestration in vacuoles. Reduced calcium content. No effect on sensitivity to sodium ions.</text>
</comment>
<comment type="similarity">
    <text evidence="8">Belongs to the V-ATPase 116 kDa subunit family.</text>
</comment>
<comment type="sequence caution" evidence="8">
    <conflict type="erroneous gene model prediction">
        <sequence resource="EMBL-CDS" id="CAB38828"/>
    </conflict>
</comment>
<comment type="sequence caution" evidence="8">
    <conflict type="erroneous gene model prediction">
        <sequence resource="EMBL-CDS" id="CAB80571"/>
    </conflict>
</comment>
<proteinExistence type="evidence at protein level"/>
<feature type="initiator methionine" description="Removed" evidence="10">
    <location>
        <position position="1"/>
    </location>
</feature>
<feature type="chain" id="PRO_0000419781" description="V-type proton ATPase subunit a3">
    <location>
        <begin position="2"/>
        <end position="821"/>
    </location>
</feature>
<feature type="topological domain" description="Cytoplasmic" evidence="2">
    <location>
        <begin position="2"/>
        <end position="421"/>
    </location>
</feature>
<feature type="transmembrane region" description="Helical" evidence="2">
    <location>
        <begin position="422"/>
        <end position="442"/>
    </location>
</feature>
<feature type="topological domain" description="Vacuolar" evidence="2">
    <location>
        <begin position="443"/>
        <end position="469"/>
    </location>
</feature>
<feature type="transmembrane region" description="Helical" evidence="2">
    <location>
        <begin position="470"/>
        <end position="490"/>
    </location>
</feature>
<feature type="topological domain" description="Cytoplasmic" evidence="2">
    <location>
        <begin position="491"/>
        <end position="548"/>
    </location>
</feature>
<feature type="transmembrane region" description="Helical" evidence="2">
    <location>
        <begin position="549"/>
        <end position="569"/>
    </location>
</feature>
<feature type="topological domain" description="Vacuolar" evidence="2">
    <location>
        <begin position="570"/>
        <end position="581"/>
    </location>
</feature>
<feature type="transmembrane region" description="Helical" evidence="2">
    <location>
        <begin position="582"/>
        <end position="602"/>
    </location>
</feature>
<feature type="topological domain" description="Cytoplasmic" evidence="2">
    <location>
        <begin position="603"/>
        <end position="640"/>
    </location>
</feature>
<feature type="transmembrane region" description="Helical" evidence="2">
    <location>
        <begin position="641"/>
        <end position="661"/>
    </location>
</feature>
<feature type="topological domain" description="Vacuolar" evidence="2">
    <location>
        <begin position="662"/>
        <end position="758"/>
    </location>
</feature>
<feature type="transmembrane region" description="Helical" evidence="2">
    <location>
        <begin position="759"/>
        <end position="779"/>
    </location>
</feature>
<feature type="topological domain" description="Cytoplasmic" evidence="2">
    <location>
        <begin position="780"/>
        <end position="821"/>
    </location>
</feature>
<feature type="coiled-coil region" evidence="2">
    <location>
        <begin position="97"/>
        <end position="144"/>
    </location>
</feature>
<feature type="modified residue" description="N-acetylalanine" evidence="10">
    <location>
        <position position="2"/>
    </location>
</feature>
<feature type="modified residue" description="Phosphoserine" evidence="9">
    <location>
        <position position="174"/>
    </location>
</feature>
<feature type="sequence conflict" description="In Ref. 5; CAA82406." evidence="8" ref="5">
    <original>AT</original>
    <variation>VP</variation>
    <location>
        <begin position="512"/>
        <end position="513"/>
    </location>
</feature>
<feature type="sequence conflict" description="In Ref. 4; BAF02018." evidence="8" ref="4">
    <original>L</original>
    <variation>M</variation>
    <location>
        <position position="728"/>
    </location>
</feature>
<organism>
    <name type="scientific">Arabidopsis thaliana</name>
    <name type="common">Mouse-ear cress</name>
    <dbReference type="NCBI Taxonomy" id="3702"/>
    <lineage>
        <taxon>Eukaryota</taxon>
        <taxon>Viridiplantae</taxon>
        <taxon>Streptophyta</taxon>
        <taxon>Embryophyta</taxon>
        <taxon>Tracheophyta</taxon>
        <taxon>Spermatophyta</taxon>
        <taxon>Magnoliopsida</taxon>
        <taxon>eudicotyledons</taxon>
        <taxon>Gunneridae</taxon>
        <taxon>Pentapetalae</taxon>
        <taxon>rosids</taxon>
        <taxon>malvids</taxon>
        <taxon>Brassicales</taxon>
        <taxon>Brassicaceae</taxon>
        <taxon>Camelineae</taxon>
        <taxon>Arabidopsis</taxon>
    </lineage>
</organism>
<gene>
    <name type="primary">VHA-a3</name>
    <name type="ordered locus">At4g39080</name>
    <name type="ORF">F19H22.180</name>
</gene>
<protein>
    <recommendedName>
        <fullName>V-type proton ATPase subunit a3</fullName>
        <shortName>V-ATPase subunit a3</shortName>
    </recommendedName>
    <alternativeName>
        <fullName>V-type proton ATPase 95 kDa subunit a isoform 3</fullName>
        <shortName>V-ATPase 95 kDa isoform a3</shortName>
    </alternativeName>
    <alternativeName>
        <fullName>Vacuolar H(+)-ATPase subunit a isoform 3</fullName>
    </alternativeName>
    <alternativeName>
        <fullName>Vacuolar proton pump subunit a3</fullName>
    </alternativeName>
    <alternativeName>
        <fullName>Vacuolar proton translocating ATPase 95 kDa subunit a isoform 3</fullName>
    </alternativeName>
</protein>
<accession>Q8W4S4</accession>
<accession>Q0WLI9</accession>
<accession>Q42216</accession>
<accession>Q56WQ9</accession>
<accession>Q9SVI5</accession>
<sequence length="821" mass="92833">MAESGGGGGCCPPMDLMRSETMQLVQLIVPMESAHLTVSYLGDLGLVQFKDLNSEKSPFQRTYAAQIKRCGEMARKIRFFRDQMSKAGVPAKEMQGKENDIDLDDVEVKLGELEAELVEINANNDKLQRSYNELMEYKLVLQKAGEFFSSAHRSAADQQRETESQQAGEDLLESPLLQEEKSIDSTKQVKLGFLTGLVPREKSMVFERILFRATRGNIFIRQTVIEEPVIDPNSGEKAEKNVFVVFYSGERAKSKILKICEAFGANRYPFSEDLGRQAQMITEVSGRLSELKTTIDAGLGQRNILLQTIGDKFELWNLKVRKEKAIYHTLNMLSLDVTKKCLVAEGWSPVFASREIQDALQRAAVDSNSQVGSIFQVLRTKESPPTYFRTNKFTSAIQEIVDAYGVAKYQEANPGVFTIVTFPFLFAVMFGDWGHGICILLATMYLILKEKKLASQKLGDIMEMAFGGRYVILMMSLFSIYTGLIYNEFFSIPFPLFAPSAYDCRDVSCSEATTIGLIKVRDTYPFGLDPVWHGSRSELPFLNSLKMKMSILLGVSQMNLGIIMSYFNARFFKSSVNIWFQFIPQMIFLNSLFGYLSVLIIIKWCTGSQADLYHVMIYMFLSPMDELGENQLFPHQKTLQLVLLFLALVSVPCMLLPKPFILKKQHEARHQGQAYAPLDETDESLHVETNGGGSHGHEEFEFSEIFVHQLIHTIEFVLGAVSNTASYLRLWALSLAHSELSSVFYEKVLLLAWGYNNPLILIVGVLVFIFATVGVLLVMETLSAFLHALRLHWVEFQNKFYEGDGYKFAPFTFIFTANEDE</sequence>
<reference key="1">
    <citation type="journal article" date="1999" name="Nature">
        <title>Sequence and analysis of chromosome 4 of the plant Arabidopsis thaliana.</title>
        <authorList>
            <person name="Mayer K.F.X."/>
            <person name="Schueller C."/>
            <person name="Wambutt R."/>
            <person name="Murphy G."/>
            <person name="Volckaert G."/>
            <person name="Pohl T."/>
            <person name="Duesterhoeft A."/>
            <person name="Stiekema W."/>
            <person name="Entian K.-D."/>
            <person name="Terryn N."/>
            <person name="Harris B."/>
            <person name="Ansorge W."/>
            <person name="Brandt P."/>
            <person name="Grivell L.A."/>
            <person name="Rieger M."/>
            <person name="Weichselgartner M."/>
            <person name="de Simone V."/>
            <person name="Obermaier B."/>
            <person name="Mache R."/>
            <person name="Mueller M."/>
            <person name="Kreis M."/>
            <person name="Delseny M."/>
            <person name="Puigdomenech P."/>
            <person name="Watson M."/>
            <person name="Schmidtheini T."/>
            <person name="Reichert B."/>
            <person name="Portetelle D."/>
            <person name="Perez-Alonso M."/>
            <person name="Boutry M."/>
            <person name="Bancroft I."/>
            <person name="Vos P."/>
            <person name="Hoheisel J."/>
            <person name="Zimmermann W."/>
            <person name="Wedler H."/>
            <person name="Ridley P."/>
            <person name="Langham S.-A."/>
            <person name="McCullagh B."/>
            <person name="Bilham L."/>
            <person name="Robben J."/>
            <person name="van der Schueren J."/>
            <person name="Grymonprez B."/>
            <person name="Chuang Y.-J."/>
            <person name="Vandenbussche F."/>
            <person name="Braeken M."/>
            <person name="Weltjens I."/>
            <person name="Voet M."/>
            <person name="Bastiaens I."/>
            <person name="Aert R."/>
            <person name="Defoor E."/>
            <person name="Weitzenegger T."/>
            <person name="Bothe G."/>
            <person name="Ramsperger U."/>
            <person name="Hilbert H."/>
            <person name="Braun M."/>
            <person name="Holzer E."/>
            <person name="Brandt A."/>
            <person name="Peters S."/>
            <person name="van Staveren M."/>
            <person name="Dirkse W."/>
            <person name="Mooijman P."/>
            <person name="Klein Lankhorst R."/>
            <person name="Rose M."/>
            <person name="Hauf J."/>
            <person name="Koetter P."/>
            <person name="Berneiser S."/>
            <person name="Hempel S."/>
            <person name="Feldpausch M."/>
            <person name="Lamberth S."/>
            <person name="Van den Daele H."/>
            <person name="De Keyser A."/>
            <person name="Buysshaert C."/>
            <person name="Gielen J."/>
            <person name="Villarroel R."/>
            <person name="De Clercq R."/>
            <person name="van Montagu M."/>
            <person name="Rogers J."/>
            <person name="Cronin A."/>
            <person name="Quail M.A."/>
            <person name="Bray-Allen S."/>
            <person name="Clark L."/>
            <person name="Doggett J."/>
            <person name="Hall S."/>
            <person name="Kay M."/>
            <person name="Lennard N."/>
            <person name="McLay K."/>
            <person name="Mayes R."/>
            <person name="Pettett A."/>
            <person name="Rajandream M.A."/>
            <person name="Lyne M."/>
            <person name="Benes V."/>
            <person name="Rechmann S."/>
            <person name="Borkova D."/>
            <person name="Bloecker H."/>
            <person name="Scharfe M."/>
            <person name="Grimm M."/>
            <person name="Loehnert T.-H."/>
            <person name="Dose S."/>
            <person name="de Haan M."/>
            <person name="Maarse A.C."/>
            <person name="Schaefer M."/>
            <person name="Mueller-Auer S."/>
            <person name="Gabel C."/>
            <person name="Fuchs M."/>
            <person name="Fartmann B."/>
            <person name="Granderath K."/>
            <person name="Dauner D."/>
            <person name="Herzl A."/>
            <person name="Neumann S."/>
            <person name="Argiriou A."/>
            <person name="Vitale D."/>
            <person name="Liguori R."/>
            <person name="Piravandi E."/>
            <person name="Massenet O."/>
            <person name="Quigley F."/>
            <person name="Clabauld G."/>
            <person name="Muendlein A."/>
            <person name="Felber R."/>
            <person name="Schnabl S."/>
            <person name="Hiller R."/>
            <person name="Schmidt W."/>
            <person name="Lecharny A."/>
            <person name="Aubourg S."/>
            <person name="Chefdor F."/>
            <person name="Cooke R."/>
            <person name="Berger C."/>
            <person name="Monfort A."/>
            <person name="Casacuberta E."/>
            <person name="Gibbons T."/>
            <person name="Weber N."/>
            <person name="Vandenbol M."/>
            <person name="Bargues M."/>
            <person name="Terol J."/>
            <person name="Torres A."/>
            <person name="Perez-Perez A."/>
            <person name="Purnelle B."/>
            <person name="Bent E."/>
            <person name="Johnson S."/>
            <person name="Tacon D."/>
            <person name="Jesse T."/>
            <person name="Heijnen L."/>
            <person name="Schwarz S."/>
            <person name="Scholler P."/>
            <person name="Heber S."/>
            <person name="Francs P."/>
            <person name="Bielke C."/>
            <person name="Frishman D."/>
            <person name="Haase D."/>
            <person name="Lemcke K."/>
            <person name="Mewes H.-W."/>
            <person name="Stocker S."/>
            <person name="Zaccaria P."/>
            <person name="Bevan M."/>
            <person name="Wilson R.K."/>
            <person name="de la Bastide M."/>
            <person name="Habermann K."/>
            <person name="Parnell L."/>
            <person name="Dedhia N."/>
            <person name="Gnoj L."/>
            <person name="Schutz K."/>
            <person name="Huang E."/>
            <person name="Spiegel L."/>
            <person name="Sekhon M."/>
            <person name="Murray J."/>
            <person name="Sheet P."/>
            <person name="Cordes M."/>
            <person name="Abu-Threideh J."/>
            <person name="Stoneking T."/>
            <person name="Kalicki J."/>
            <person name="Graves T."/>
            <person name="Harmon G."/>
            <person name="Edwards J."/>
            <person name="Latreille P."/>
            <person name="Courtney L."/>
            <person name="Cloud J."/>
            <person name="Abbott A."/>
            <person name="Scott K."/>
            <person name="Johnson D."/>
            <person name="Minx P."/>
            <person name="Bentley D."/>
            <person name="Fulton B."/>
            <person name="Miller N."/>
            <person name="Greco T."/>
            <person name="Kemp K."/>
            <person name="Kramer J."/>
            <person name="Fulton L."/>
            <person name="Mardis E."/>
            <person name="Dante M."/>
            <person name="Pepin K."/>
            <person name="Hillier L.W."/>
            <person name="Nelson J."/>
            <person name="Spieth J."/>
            <person name="Ryan E."/>
            <person name="Andrews S."/>
            <person name="Geisel C."/>
            <person name="Layman D."/>
            <person name="Du H."/>
            <person name="Ali J."/>
            <person name="Berghoff A."/>
            <person name="Jones K."/>
            <person name="Drone K."/>
            <person name="Cotton M."/>
            <person name="Joshu C."/>
            <person name="Antonoiu B."/>
            <person name="Zidanic M."/>
            <person name="Strong C."/>
            <person name="Sun H."/>
            <person name="Lamar B."/>
            <person name="Yordan C."/>
            <person name="Ma P."/>
            <person name="Zhong J."/>
            <person name="Preston R."/>
            <person name="Vil D."/>
            <person name="Shekher M."/>
            <person name="Matero A."/>
            <person name="Shah R."/>
            <person name="Swaby I.K."/>
            <person name="O'Shaughnessy A."/>
            <person name="Rodriguez M."/>
            <person name="Hoffman J."/>
            <person name="Till S."/>
            <person name="Granat S."/>
            <person name="Shohdy N."/>
            <person name="Hasegawa A."/>
            <person name="Hameed A."/>
            <person name="Lodhi M."/>
            <person name="Johnson A."/>
            <person name="Chen E."/>
            <person name="Marra M.A."/>
            <person name="Martienssen R."/>
            <person name="McCombie W.R."/>
        </authorList>
    </citation>
    <scope>NUCLEOTIDE SEQUENCE [LARGE SCALE GENOMIC DNA]</scope>
    <source>
        <strain>cv. Columbia</strain>
    </source>
</reference>
<reference key="2">
    <citation type="journal article" date="2017" name="Plant J.">
        <title>Araport11: a complete reannotation of the Arabidopsis thaliana reference genome.</title>
        <authorList>
            <person name="Cheng C.Y."/>
            <person name="Krishnakumar V."/>
            <person name="Chan A.P."/>
            <person name="Thibaud-Nissen F."/>
            <person name="Schobel S."/>
            <person name="Town C.D."/>
        </authorList>
    </citation>
    <scope>GENOME REANNOTATION</scope>
    <source>
        <strain>cv. Columbia</strain>
    </source>
</reference>
<reference key="3">
    <citation type="journal article" date="2003" name="Science">
        <title>Empirical analysis of transcriptional activity in the Arabidopsis genome.</title>
        <authorList>
            <person name="Yamada K."/>
            <person name="Lim J."/>
            <person name="Dale J.M."/>
            <person name="Chen H."/>
            <person name="Shinn P."/>
            <person name="Palm C.J."/>
            <person name="Southwick A.M."/>
            <person name="Wu H.C."/>
            <person name="Kim C.J."/>
            <person name="Nguyen M."/>
            <person name="Pham P.K."/>
            <person name="Cheuk R.F."/>
            <person name="Karlin-Newmann G."/>
            <person name="Liu S.X."/>
            <person name="Lam B."/>
            <person name="Sakano H."/>
            <person name="Wu T."/>
            <person name="Yu G."/>
            <person name="Miranda M."/>
            <person name="Quach H.L."/>
            <person name="Tripp M."/>
            <person name="Chang C.H."/>
            <person name="Lee J.M."/>
            <person name="Toriumi M.J."/>
            <person name="Chan M.M."/>
            <person name="Tang C.C."/>
            <person name="Onodera C.S."/>
            <person name="Deng J.M."/>
            <person name="Akiyama K."/>
            <person name="Ansari Y."/>
            <person name="Arakawa T."/>
            <person name="Banh J."/>
            <person name="Banno F."/>
            <person name="Bowser L."/>
            <person name="Brooks S.Y."/>
            <person name="Carninci P."/>
            <person name="Chao Q."/>
            <person name="Choy N."/>
            <person name="Enju A."/>
            <person name="Goldsmith A.D."/>
            <person name="Gurjal M."/>
            <person name="Hansen N.F."/>
            <person name="Hayashizaki Y."/>
            <person name="Johnson-Hopson C."/>
            <person name="Hsuan V.W."/>
            <person name="Iida K."/>
            <person name="Karnes M."/>
            <person name="Khan S."/>
            <person name="Koesema E."/>
            <person name="Ishida J."/>
            <person name="Jiang P.X."/>
            <person name="Jones T."/>
            <person name="Kawai J."/>
            <person name="Kamiya A."/>
            <person name="Meyers C."/>
            <person name="Nakajima M."/>
            <person name="Narusaka M."/>
            <person name="Seki M."/>
            <person name="Sakurai T."/>
            <person name="Satou M."/>
            <person name="Tamse R."/>
            <person name="Vaysberg M."/>
            <person name="Wallender E.K."/>
            <person name="Wong C."/>
            <person name="Yamamura Y."/>
            <person name="Yuan S."/>
            <person name="Shinozaki K."/>
            <person name="Davis R.W."/>
            <person name="Theologis A."/>
            <person name="Ecker J.R."/>
        </authorList>
    </citation>
    <scope>NUCLEOTIDE SEQUENCE [LARGE SCALE MRNA]</scope>
    <source>
        <strain>cv. Columbia</strain>
    </source>
</reference>
<reference key="4">
    <citation type="submission" date="2006-07" db="EMBL/GenBank/DDBJ databases">
        <title>Large-scale analysis of RIKEN Arabidopsis full-length (RAFL) cDNAs.</title>
        <authorList>
            <person name="Totoki Y."/>
            <person name="Seki M."/>
            <person name="Ishida J."/>
            <person name="Nakajima M."/>
            <person name="Enju A."/>
            <person name="Kamiya A."/>
            <person name="Narusaka M."/>
            <person name="Shin-i T."/>
            <person name="Nakagawa M."/>
            <person name="Sakamoto N."/>
            <person name="Oishi K."/>
            <person name="Kohara Y."/>
            <person name="Kobayashi M."/>
            <person name="Toyoda A."/>
            <person name="Sakaki Y."/>
            <person name="Sakurai T."/>
            <person name="Iida K."/>
            <person name="Akiyama K."/>
            <person name="Satou M."/>
            <person name="Toyoda T."/>
            <person name="Konagaya A."/>
            <person name="Carninci P."/>
            <person name="Kawai J."/>
            <person name="Hayashizaki Y."/>
            <person name="Shinozaki K."/>
        </authorList>
    </citation>
    <scope>NUCLEOTIDE SEQUENCE [LARGE SCALE MRNA]</scope>
    <source>
        <strain>cv. Columbia</strain>
    </source>
</reference>
<reference key="5">
    <citation type="submission" date="1994-01" db="EMBL/GenBank/DDBJ databases">
        <title>The Arabidopsis thaliana transcribed genome: the GDR cDNA program.</title>
        <authorList>
            <person name="Desprez T."/>
            <person name="Amselem J."/>
            <person name="Chiapello H."/>
            <person name="Caboche M."/>
            <person name="Hoefte H."/>
        </authorList>
    </citation>
    <scope>NUCLEOTIDE SEQUENCE [LARGE SCALE MRNA] OF 466-569</scope>
    <source>
        <strain>cv. Columbia</strain>
        <tissue>Seedling</tissue>
    </source>
</reference>
<reference key="6">
    <citation type="journal article" date="2002" name="Trends Plant Sci.">
        <title>A simple nomenclature for a complex proton pump: VHA genes encode the vacuolar H(+)-ATPase.</title>
        <authorList>
            <person name="Sze H."/>
            <person name="Schumacher K."/>
            <person name="Mueller M.L."/>
            <person name="Padmanaban S."/>
            <person name="Taiz L."/>
        </authorList>
    </citation>
    <scope>GENE FAMILY</scope>
    <scope>NOMENCLATURE</scope>
</reference>
<reference key="7">
    <citation type="journal article" date="2006" name="Plant Cell">
        <title>Vacuolar H(+)-ATPase activity is required for endocytic and secretory trafficking in Arabidopsis.</title>
        <authorList>
            <person name="Dettmer J."/>
            <person name="Hong-Hermesdorf A."/>
            <person name="Stierhof Y.-D."/>
            <person name="Schumacher K."/>
        </authorList>
    </citation>
    <scope>SUBCELLULAR LOCATION</scope>
    <scope>GENE FAMILY</scope>
</reference>
<reference key="8">
    <citation type="journal article" date="2006" name="Plant Physiol.">
        <title>Identification of a vacuolar sucrose transporter in barley and Arabidopsis mesophyll cells by a tonoplast proteomic approach.</title>
        <authorList>
            <person name="Endler A."/>
            <person name="Meyer S."/>
            <person name="Schelbert S."/>
            <person name="Schneider T."/>
            <person name="Weschke W."/>
            <person name="Peters S.W."/>
            <person name="Keller F."/>
            <person name="Baginsky S."/>
            <person name="Martinoia E."/>
            <person name="Schmidt U.G."/>
        </authorList>
    </citation>
    <scope>SUBCELLULAR LOCATION</scope>
    <scope>IDENTIFICATION BY MASS SPECTROMETRY</scope>
</reference>
<reference key="9">
    <citation type="journal article" date="2007" name="Mol. Cell. Proteomics">
        <title>A proteomics dissection of Arabidopsis thaliana vacuoles isolated from cell culture.</title>
        <authorList>
            <person name="Jaquinod M."/>
            <person name="Villiers F."/>
            <person name="Kieffer-Jaquinod S."/>
            <person name="Hugouvieux V."/>
            <person name="Bruley C."/>
            <person name="Garin J."/>
            <person name="Bourguignon J."/>
        </authorList>
    </citation>
    <scope>IDENTIFICATION BY MASS SPECTROMETRY</scope>
    <scope>SUBCELLULAR LOCATION [LARGE SCALE ANALYSIS]</scope>
</reference>
<reference key="10">
    <citation type="journal article" date="2008" name="Plant Cell">
        <title>Reduced V-ATPase activity in the trans-Golgi network causes oxylipin-dependent hypocotyl growth Inhibition in Arabidopsis.</title>
        <authorList>
            <person name="Bruex A."/>
            <person name="Liu T.-Y."/>
            <person name="Krebs M."/>
            <person name="Stierhof Y.-D."/>
            <person name="Lohmann J.U."/>
            <person name="Miersch O."/>
            <person name="Wasternack C."/>
            <person name="Schumacher K."/>
        </authorList>
    </citation>
    <scope>DISRUPTION PHENOTYPE</scope>
    <scope>SUBCELLULAR LOCATION</scope>
    <scope>TISSUE SPECIFICITY</scope>
    <source>
        <strain>cv. Columbia</strain>
    </source>
</reference>
<reference key="11">
    <citation type="journal article" date="2009" name="Plant Physiol.">
        <title>Large-scale Arabidopsis phosphoproteome profiling reveals novel chloroplast kinase substrates and phosphorylation networks.</title>
        <authorList>
            <person name="Reiland S."/>
            <person name="Messerli G."/>
            <person name="Baerenfaller K."/>
            <person name="Gerrits B."/>
            <person name="Endler A."/>
            <person name="Grossmann J."/>
            <person name="Gruissem W."/>
            <person name="Baginsky S."/>
        </authorList>
    </citation>
    <scope>PHOSPHORYLATION [LARGE SCALE ANALYSIS] AT SER-174</scope>
    <scope>IDENTIFICATION BY MASS SPECTROMETRY [LARGE SCALE ANALYSIS]</scope>
</reference>
<reference key="12">
    <citation type="journal article" date="2010" name="Proc. Natl. Acad. Sci. U.S.A.">
        <title>Arabidopsis V-ATPase activity at the tonoplast is required for efficient nutrient storage but not for sodium accumulation.</title>
        <authorList>
            <person name="Krebs M."/>
            <person name="Beyhl D."/>
            <person name="Goerlich E."/>
            <person name="Al-Rasheid K.A.S."/>
            <person name="Marten I."/>
            <person name="Stierhof Y.-D."/>
            <person name="Hedrich R."/>
            <person name="Schumacher K."/>
        </authorList>
    </citation>
    <scope>FUNCTION</scope>
    <scope>DISRUPTION PHENOTYPE</scope>
</reference>
<reference key="13">
    <citation type="journal article" date="2012" name="Mol. Cell. Proteomics">
        <title>Comparative large-scale characterisation of plant vs. mammal proteins reveals similar and idiosyncratic N-alpha acetylation features.</title>
        <authorList>
            <person name="Bienvenut W.V."/>
            <person name="Sumpton D."/>
            <person name="Martinez A."/>
            <person name="Lilla S."/>
            <person name="Espagne C."/>
            <person name="Meinnel T."/>
            <person name="Giglione C."/>
        </authorList>
    </citation>
    <scope>ACETYLATION [LARGE SCALE ANALYSIS] AT ALA-2</scope>
    <scope>CLEAVAGE OF INITIATOR METHIONINE [LARGE SCALE ANALYSIS]</scope>
    <scope>IDENTIFICATION BY MASS SPECTROMETRY [LARGE SCALE ANALYSIS]</scope>
</reference>
<evidence type="ECO:0000250" key="1"/>
<evidence type="ECO:0000255" key="2"/>
<evidence type="ECO:0000269" key="3">
    <source>
    </source>
</evidence>
<evidence type="ECO:0000269" key="4">
    <source>
    </source>
</evidence>
<evidence type="ECO:0000269" key="5">
    <source>
    </source>
</evidence>
<evidence type="ECO:0000269" key="6">
    <source>
    </source>
</evidence>
<evidence type="ECO:0000269" key="7">
    <source>
    </source>
</evidence>
<evidence type="ECO:0000305" key="8"/>
<evidence type="ECO:0007744" key="9">
    <source>
    </source>
</evidence>
<evidence type="ECO:0007744" key="10">
    <source>
    </source>
</evidence>
<name>VHAA3_ARATH</name>
<keyword id="KW-0007">Acetylation</keyword>
<keyword id="KW-0175">Coiled coil</keyword>
<keyword id="KW-0375">Hydrogen ion transport</keyword>
<keyword id="KW-0406">Ion transport</keyword>
<keyword id="KW-0472">Membrane</keyword>
<keyword id="KW-0597">Phosphoprotein</keyword>
<keyword id="KW-1185">Reference proteome</keyword>
<keyword id="KW-0812">Transmembrane</keyword>
<keyword id="KW-1133">Transmembrane helix</keyword>
<keyword id="KW-0813">Transport</keyword>
<keyword id="KW-0926">Vacuole</keyword>
<dbReference type="EMBL" id="AL035679">
    <property type="protein sequence ID" value="CAB38828.1"/>
    <property type="status" value="ALT_SEQ"/>
    <property type="molecule type" value="Genomic_DNA"/>
</dbReference>
<dbReference type="EMBL" id="AL161594">
    <property type="protein sequence ID" value="CAB80571.1"/>
    <property type="status" value="ALT_SEQ"/>
    <property type="molecule type" value="Genomic_DNA"/>
</dbReference>
<dbReference type="EMBL" id="CP002687">
    <property type="protein sequence ID" value="AEE87015.1"/>
    <property type="molecule type" value="Genomic_DNA"/>
</dbReference>
<dbReference type="EMBL" id="AY060557">
    <property type="protein sequence ID" value="AAL31187.1"/>
    <property type="molecule type" value="mRNA"/>
</dbReference>
<dbReference type="EMBL" id="BT002615">
    <property type="protein sequence ID" value="AAO11531.1"/>
    <property type="molecule type" value="mRNA"/>
</dbReference>
<dbReference type="EMBL" id="AK221976">
    <property type="protein sequence ID" value="BAD94513.1"/>
    <property type="molecule type" value="mRNA"/>
</dbReference>
<dbReference type="EMBL" id="AK227321">
    <property type="protein sequence ID" value="BAE99335.1"/>
    <property type="molecule type" value="mRNA"/>
</dbReference>
<dbReference type="EMBL" id="AK230210">
    <property type="protein sequence ID" value="BAF02018.1"/>
    <property type="molecule type" value="mRNA"/>
</dbReference>
<dbReference type="EMBL" id="Z29167">
    <property type="protein sequence ID" value="CAA82406.1"/>
    <property type="molecule type" value="mRNA"/>
</dbReference>
<dbReference type="PIR" id="T06068">
    <property type="entry name" value="T06068"/>
</dbReference>
<dbReference type="RefSeq" id="NP_568051.1">
    <property type="nucleotide sequence ID" value="NM_120068.5"/>
</dbReference>
<dbReference type="SMR" id="Q8W4S4"/>
<dbReference type="BioGRID" id="15343">
    <property type="interactions" value="16"/>
</dbReference>
<dbReference type="FunCoup" id="Q8W4S4">
    <property type="interactions" value="2497"/>
</dbReference>
<dbReference type="STRING" id="3702.Q8W4S4"/>
<dbReference type="iPTMnet" id="Q8W4S4"/>
<dbReference type="SwissPalm" id="Q8W4S4"/>
<dbReference type="PaxDb" id="3702-AT4G39080.1"/>
<dbReference type="ProteomicsDB" id="243197"/>
<dbReference type="EnsemblPlants" id="AT4G39080.1">
    <property type="protein sequence ID" value="AT4G39080.1"/>
    <property type="gene ID" value="AT4G39080"/>
</dbReference>
<dbReference type="GeneID" id="830063"/>
<dbReference type="Gramene" id="AT4G39080.1">
    <property type="protein sequence ID" value="AT4G39080.1"/>
    <property type="gene ID" value="AT4G39080"/>
</dbReference>
<dbReference type="KEGG" id="ath:AT4G39080"/>
<dbReference type="Araport" id="AT4G39080"/>
<dbReference type="TAIR" id="AT4G39080">
    <property type="gene designation" value="VHA-A3"/>
</dbReference>
<dbReference type="eggNOG" id="KOG2189">
    <property type="taxonomic scope" value="Eukaryota"/>
</dbReference>
<dbReference type="HOGENOM" id="CLU_005230_0_0_1"/>
<dbReference type="InParanoid" id="Q8W4S4"/>
<dbReference type="OMA" id="FYLWFFL"/>
<dbReference type="PhylomeDB" id="Q8W4S4"/>
<dbReference type="CD-CODE" id="4299E36E">
    <property type="entry name" value="Nucleolus"/>
</dbReference>
<dbReference type="PRO" id="PR:Q8W4S4"/>
<dbReference type="Proteomes" id="UP000006548">
    <property type="component" value="Chromosome 4"/>
</dbReference>
<dbReference type="ExpressionAtlas" id="Q8W4S4">
    <property type="expression patterns" value="baseline and differential"/>
</dbReference>
<dbReference type="GO" id="GO:0009507">
    <property type="term" value="C:chloroplast"/>
    <property type="evidence" value="ECO:0007005"/>
    <property type="project" value="TAIR"/>
</dbReference>
<dbReference type="GO" id="GO:0009941">
    <property type="term" value="C:chloroplast envelope"/>
    <property type="evidence" value="ECO:0007005"/>
    <property type="project" value="TAIR"/>
</dbReference>
<dbReference type="GO" id="GO:0005794">
    <property type="term" value="C:Golgi apparatus"/>
    <property type="evidence" value="ECO:0007005"/>
    <property type="project" value="TAIR"/>
</dbReference>
<dbReference type="GO" id="GO:0000325">
    <property type="term" value="C:plant-type vacuole"/>
    <property type="evidence" value="ECO:0007005"/>
    <property type="project" value="TAIR"/>
</dbReference>
<dbReference type="GO" id="GO:0009705">
    <property type="term" value="C:plant-type vacuole membrane"/>
    <property type="evidence" value="ECO:0000314"/>
    <property type="project" value="TAIR"/>
</dbReference>
<dbReference type="GO" id="GO:0005886">
    <property type="term" value="C:plasma membrane"/>
    <property type="evidence" value="ECO:0007005"/>
    <property type="project" value="TAIR"/>
</dbReference>
<dbReference type="GO" id="GO:0005774">
    <property type="term" value="C:vacuolar membrane"/>
    <property type="evidence" value="ECO:0007005"/>
    <property type="project" value="TAIR"/>
</dbReference>
<dbReference type="GO" id="GO:0000220">
    <property type="term" value="C:vacuolar proton-transporting V-type ATPase, V0 domain"/>
    <property type="evidence" value="ECO:0007669"/>
    <property type="project" value="InterPro"/>
</dbReference>
<dbReference type="GO" id="GO:0005773">
    <property type="term" value="C:vacuole"/>
    <property type="evidence" value="ECO:0007005"/>
    <property type="project" value="TAIR"/>
</dbReference>
<dbReference type="GO" id="GO:0009678">
    <property type="term" value="F:diphosphate hydrolysis-driven proton transmembrane transporter activity"/>
    <property type="evidence" value="ECO:0000314"/>
    <property type="project" value="TAIR"/>
</dbReference>
<dbReference type="GO" id="GO:0046961">
    <property type="term" value="F:proton-transporting ATPase activity, rotational mechanism"/>
    <property type="evidence" value="ECO:0007669"/>
    <property type="project" value="InterPro"/>
</dbReference>
<dbReference type="GO" id="GO:0015986">
    <property type="term" value="P:proton motive force-driven ATP synthesis"/>
    <property type="evidence" value="ECO:0000314"/>
    <property type="project" value="TAIR"/>
</dbReference>
<dbReference type="GO" id="GO:0070072">
    <property type="term" value="P:vacuolar proton-transporting V-type ATPase complex assembly"/>
    <property type="evidence" value="ECO:0000315"/>
    <property type="project" value="UniProtKB"/>
</dbReference>
<dbReference type="GO" id="GO:0043181">
    <property type="term" value="P:vacuolar sequestering"/>
    <property type="evidence" value="ECO:0000315"/>
    <property type="project" value="UniProtKB"/>
</dbReference>
<dbReference type="InterPro" id="IPR002490">
    <property type="entry name" value="V-ATPase_116kDa_su"/>
</dbReference>
<dbReference type="InterPro" id="IPR026028">
    <property type="entry name" value="V-type_ATPase_116kDa_su_euka"/>
</dbReference>
<dbReference type="PANTHER" id="PTHR11629:SF112">
    <property type="entry name" value="V-TYPE PROTON ATPASE SUBUNIT A3"/>
    <property type="match status" value="1"/>
</dbReference>
<dbReference type="PANTHER" id="PTHR11629">
    <property type="entry name" value="VACUOLAR PROTON ATPASES"/>
    <property type="match status" value="1"/>
</dbReference>
<dbReference type="Pfam" id="PF01496">
    <property type="entry name" value="V_ATPase_I"/>
    <property type="match status" value="1"/>
</dbReference>
<dbReference type="PIRSF" id="PIRSF001293">
    <property type="entry name" value="ATP6V0A1"/>
    <property type="match status" value="1"/>
</dbReference>